<organism>
    <name type="scientific">Mus musculus</name>
    <name type="common">Mouse</name>
    <dbReference type="NCBI Taxonomy" id="10090"/>
    <lineage>
        <taxon>Eukaryota</taxon>
        <taxon>Metazoa</taxon>
        <taxon>Chordata</taxon>
        <taxon>Craniata</taxon>
        <taxon>Vertebrata</taxon>
        <taxon>Euteleostomi</taxon>
        <taxon>Mammalia</taxon>
        <taxon>Eutheria</taxon>
        <taxon>Euarchontoglires</taxon>
        <taxon>Glires</taxon>
        <taxon>Rodentia</taxon>
        <taxon>Myomorpha</taxon>
        <taxon>Muroidea</taxon>
        <taxon>Muridae</taxon>
        <taxon>Murinae</taxon>
        <taxon>Mus</taxon>
        <taxon>Mus</taxon>
    </lineage>
</organism>
<name>CXL10_MOUSE</name>
<accession>P17515</accession>
<protein>
    <recommendedName>
        <fullName>C-X-C motif chemokine 10</fullName>
    </recommendedName>
    <alternativeName>
        <fullName>10 kDa interferon gamma-induced protein</fullName>
        <shortName>Gamma-IP10</shortName>
        <shortName>IP-10</shortName>
    </alternativeName>
    <alternativeName>
        <fullName>C7</fullName>
    </alternativeName>
    <alternativeName>
        <fullName>Interferon-gamma induced protein CRG-2</fullName>
    </alternativeName>
    <alternativeName>
        <fullName>Small-inducible cytokine B10</fullName>
    </alternativeName>
</protein>
<gene>
    <name type="primary">Cxcl10</name>
    <name type="synonym">Crg2</name>
    <name type="synonym">Ifi10</name>
    <name type="synonym">Inp10</name>
    <name type="synonym">Scyb10</name>
</gene>
<proteinExistence type="evidence at protein level"/>
<reference key="1">
    <citation type="journal article" date="1990" name="Biochem. Biophys. Res. Commun.">
        <title>A macrophage LPS-inducible early gene encodes the murine homologue of IP-10.</title>
        <authorList>
            <person name="Ohmori Y."/>
            <person name="Hamilton T.A."/>
        </authorList>
    </citation>
    <scope>NUCLEOTIDE SEQUENCE [MRNA]</scope>
    <source>
        <strain>C57BL/6J</strain>
    </source>
</reference>
<reference key="2">
    <citation type="journal article" date="1990" name="J. Biol. Chem.">
        <title>Identification of CRG-2. An interferon-inducible mRNA predicted to encode a murine monokine.</title>
        <authorList>
            <person name="Vanguri P."/>
            <person name="Farber J.M."/>
        </authorList>
    </citation>
    <scope>NUCLEOTIDE SEQUENCE [MRNA]</scope>
</reference>
<reference key="3">
    <citation type="journal article" date="1993" name="J. Biol. Chem.">
        <title>Cooperative interaction between interferon (IFN) stimulus response element and kappa B sequence motifs controls IFN gamma- and lipopolysaccharide-stimulated transcription from the murine IP-10 promoter.</title>
        <authorList>
            <person name="Ohmori Y."/>
            <person name="Hamilton T.A."/>
        </authorList>
    </citation>
    <scope>NUCLEOTIDE SEQUENCE [GENOMIC DNA]</scope>
    <source>
        <strain>DBA/2J</strain>
        <tissue>Liver</tissue>
    </source>
</reference>
<reference key="4">
    <citation type="journal article" date="2004" name="Genome Res.">
        <title>The status, quality, and expansion of the NIH full-length cDNA project: the Mammalian Gene Collection (MGC).</title>
        <authorList>
            <consortium name="The MGC Project Team"/>
        </authorList>
    </citation>
    <scope>NUCLEOTIDE SEQUENCE [LARGE SCALE MRNA]</scope>
    <source>
        <strain>C57BL/6J</strain>
        <tissue>Thymus</tissue>
    </source>
</reference>
<reference key="5">
    <citation type="journal article" date="1994" name="J. Exp. Med.">
        <title>Constitutive expression of interferon gamma-inducible protein 10 in lymphoid organs and inducible expression in T cells and thymocytes.</title>
        <authorList>
            <person name="Gattass C.R."/>
            <person name="King L.B."/>
            <person name="Luster A.D."/>
            <person name="Ashwell J.D."/>
        </authorList>
    </citation>
    <scope>TISSUE SPECIFICITY</scope>
</reference>
<reference key="6">
    <citation type="journal article" date="2004" name="J. Neurosci.">
        <title>CXCR3-dependent microglial recruitment is essential for dendrite loss after brain lesion.</title>
        <authorList>
            <person name="Rappert A."/>
            <person name="Bechmann I."/>
            <person name="Pivneva T."/>
            <person name="Mahlo J."/>
            <person name="Biber K."/>
            <person name="Nolte C."/>
            <person name="Kovac A.D."/>
            <person name="Gerard C."/>
            <person name="Boddeke H.W."/>
            <person name="Nitsch R."/>
            <person name="Kettenmann H."/>
        </authorList>
    </citation>
    <scope>FUNCTION</scope>
    <scope>TISSUE SPECIFICITY</scope>
</reference>
<reference key="7">
    <citation type="journal article" date="2008" name="Eur. J. Immunol.">
        <title>CXCL10/CXCR3-mediated responses promote immunity to respiratory syncytial virus infection by augmenting dendritic cell and CD8(+) T cell efficacy.</title>
        <authorList>
            <person name="Lindell D.M."/>
            <person name="Lane T.E."/>
            <person name="Lukacs N.W."/>
        </authorList>
    </citation>
    <scope>FUNCTION</scope>
</reference>
<reference key="8">
    <citation type="journal article" date="2008" name="J. Immunol.">
        <title>Dysregulation of CXCR3 signaling due to CXCL10 deficiency impairs the antiviral response to herpes simplex virus 1 infection.</title>
        <authorList>
            <person name="Wuest T.R."/>
            <person name="Carr D.J."/>
        </authorList>
    </citation>
    <scope>FUNCTION</scope>
    <scope>DISRUPTION PHENOTYPE</scope>
</reference>
<reference key="9">
    <citation type="journal article" date="2017" name="J. Virol.">
        <title>CXCL10/CXCR3-Dependent Mobilization of Herpes Simplex Virus-Specific CD8+ TEM and CD8+ TRM Cells within Infected Tissues Allows Efficient Protection against Recurrent Herpesvirus Infection and Disease.</title>
        <authorList>
            <person name="Srivastava R."/>
            <person name="Khan A.A."/>
            <person name="Chilukuri S."/>
            <person name="Syed S.A."/>
            <person name="Tran T.T."/>
            <person name="Furness J."/>
            <person name="Bahraoui E."/>
            <person name="BenMohamed L."/>
        </authorList>
    </citation>
    <scope>FUNCTION</scope>
    <scope>DISRUPTION PHENOTYPE</scope>
</reference>
<reference key="10">
    <citation type="journal article" date="2017" name="Angiogenesis">
        <title>CXCL10 suppression of hem- and lymph-angiogenesis in inflamed corneas through MMP13.</title>
        <authorList>
            <person name="Gao N."/>
            <person name="Liu X."/>
            <person name="Wu J."/>
            <person name="Li J."/>
            <person name="Dong C."/>
            <person name="Wu X."/>
            <person name="Xiao X."/>
            <person name="Yu F.X."/>
        </authorList>
    </citation>
    <scope>FUNCTION</scope>
</reference>
<reference key="11">
    <citation type="journal article" date="2008" name="Acta Crystallogr. D">
        <title>Structure of mouse IP-10, a chemokine.</title>
        <authorList>
            <person name="Jabeen T."/>
            <person name="Leonard P."/>
            <person name="Jamaluddin H."/>
            <person name="Acharya K.R."/>
        </authorList>
    </citation>
    <scope>X-RAY CRYSTALLOGRAPHY (2.5 ANGSTROMS) OF 23-89</scope>
    <scope>DISULFIDE BONDS</scope>
    <scope>SUBUNIT</scope>
</reference>
<dbReference type="EMBL" id="M33266">
    <property type="protein sequence ID" value="AAA02968.1"/>
    <property type="molecule type" value="mRNA"/>
</dbReference>
<dbReference type="EMBL" id="M86829">
    <property type="protein sequence ID" value="AAA21489.1"/>
    <property type="molecule type" value="mRNA"/>
</dbReference>
<dbReference type="EMBL" id="L07417">
    <property type="protein sequence ID" value="AAA75249.1"/>
    <property type="molecule type" value="Genomic_DNA"/>
</dbReference>
<dbReference type="EMBL" id="BC030067">
    <property type="protein sequence ID" value="AAH30067.1"/>
    <property type="molecule type" value="mRNA"/>
</dbReference>
<dbReference type="CCDS" id="CCDS39153.1"/>
<dbReference type="PIR" id="A45492">
    <property type="entry name" value="A45492"/>
</dbReference>
<dbReference type="RefSeq" id="NP_067249.1">
    <property type="nucleotide sequence ID" value="NM_021274.2"/>
</dbReference>
<dbReference type="PDB" id="2R3Z">
    <property type="method" value="X-ray"/>
    <property type="resolution" value="2.50 A"/>
    <property type="chains" value="A/B/C/D=23-89"/>
</dbReference>
<dbReference type="PDBsum" id="2R3Z"/>
<dbReference type="SMR" id="P17515"/>
<dbReference type="FunCoup" id="P17515">
    <property type="interactions" value="688"/>
</dbReference>
<dbReference type="STRING" id="10090.ENSMUSP00000047646"/>
<dbReference type="PhosphoSitePlus" id="P17515"/>
<dbReference type="PaxDb" id="10090-ENSMUSP00000047646"/>
<dbReference type="ProteomicsDB" id="284079"/>
<dbReference type="Antibodypedia" id="6335">
    <property type="antibodies" value="921 antibodies from 44 providers"/>
</dbReference>
<dbReference type="DNASU" id="15945"/>
<dbReference type="Ensembl" id="ENSMUST00000038816.13">
    <property type="protein sequence ID" value="ENSMUSP00000047646.7"/>
    <property type="gene ID" value="ENSMUSG00000034855.14"/>
</dbReference>
<dbReference type="GeneID" id="15945"/>
<dbReference type="KEGG" id="mmu:15945"/>
<dbReference type="UCSC" id="uc008ycz.2">
    <property type="organism name" value="mouse"/>
</dbReference>
<dbReference type="AGR" id="MGI:1352450"/>
<dbReference type="CTD" id="3627"/>
<dbReference type="MGI" id="MGI:1352450">
    <property type="gene designation" value="Cxcl10"/>
</dbReference>
<dbReference type="VEuPathDB" id="HostDB:ENSMUSG00000034855"/>
<dbReference type="eggNOG" id="ENOG502S7MM">
    <property type="taxonomic scope" value="Eukaryota"/>
</dbReference>
<dbReference type="GeneTree" id="ENSGT00940000161759"/>
<dbReference type="InParanoid" id="P17515"/>
<dbReference type="OMA" id="RNIRCRC"/>
<dbReference type="OrthoDB" id="9948647at2759"/>
<dbReference type="PhylomeDB" id="P17515"/>
<dbReference type="TreeFam" id="TF333433"/>
<dbReference type="Reactome" id="R-MMU-380108">
    <property type="pathway name" value="Chemokine receptors bind chemokines"/>
</dbReference>
<dbReference type="Reactome" id="R-MMU-418594">
    <property type="pathway name" value="G alpha (i) signalling events"/>
</dbReference>
<dbReference type="BioGRID-ORCS" id="15945">
    <property type="hits" value="2 hits in 82 CRISPR screens"/>
</dbReference>
<dbReference type="EvolutionaryTrace" id="P17515"/>
<dbReference type="PRO" id="PR:P17515"/>
<dbReference type="Proteomes" id="UP000000589">
    <property type="component" value="Chromosome 5"/>
</dbReference>
<dbReference type="RNAct" id="P17515">
    <property type="molecule type" value="protein"/>
</dbReference>
<dbReference type="Bgee" id="ENSMUSG00000034855">
    <property type="expression patterns" value="Expressed in mesenteric lymph node and 84 other cell types or tissues"/>
</dbReference>
<dbReference type="ExpressionAtlas" id="P17515">
    <property type="expression patterns" value="baseline and differential"/>
</dbReference>
<dbReference type="GO" id="GO:0009897">
    <property type="term" value="C:external side of plasma membrane"/>
    <property type="evidence" value="ECO:0000314"/>
    <property type="project" value="MGI"/>
</dbReference>
<dbReference type="GO" id="GO:0005615">
    <property type="term" value="C:extracellular space"/>
    <property type="evidence" value="ECO:0000314"/>
    <property type="project" value="MGI"/>
</dbReference>
<dbReference type="GO" id="GO:0042056">
    <property type="term" value="F:chemoattractant activity"/>
    <property type="evidence" value="ECO:0007669"/>
    <property type="project" value="Ensembl"/>
</dbReference>
<dbReference type="GO" id="GO:0008009">
    <property type="term" value="F:chemokine activity"/>
    <property type="evidence" value="ECO:0000250"/>
    <property type="project" value="UniProtKB"/>
</dbReference>
<dbReference type="GO" id="GO:0048248">
    <property type="term" value="F:CXCR3 chemokine receptor binding"/>
    <property type="evidence" value="ECO:0000250"/>
    <property type="project" value="UniProtKB"/>
</dbReference>
<dbReference type="GO" id="GO:0008201">
    <property type="term" value="F:heparin binding"/>
    <property type="evidence" value="ECO:0007669"/>
    <property type="project" value="Ensembl"/>
</dbReference>
<dbReference type="GO" id="GO:0007189">
    <property type="term" value="P:adenylate cyclase-activating G protein-coupled receptor signaling pathway"/>
    <property type="evidence" value="ECO:0000250"/>
    <property type="project" value="UniProtKB"/>
</dbReference>
<dbReference type="GO" id="GO:0140374">
    <property type="term" value="P:antiviral innate immune response"/>
    <property type="evidence" value="ECO:0007669"/>
    <property type="project" value="Ensembl"/>
</dbReference>
<dbReference type="GO" id="GO:0097398">
    <property type="term" value="P:cellular response to interleukin-17"/>
    <property type="evidence" value="ECO:0000314"/>
    <property type="project" value="MGI"/>
</dbReference>
<dbReference type="GO" id="GO:0071222">
    <property type="term" value="P:cellular response to lipopolysaccharide"/>
    <property type="evidence" value="ECO:0000266"/>
    <property type="project" value="MGI"/>
</dbReference>
<dbReference type="GO" id="GO:0098586">
    <property type="term" value="P:cellular response to virus"/>
    <property type="evidence" value="ECO:0007669"/>
    <property type="project" value="Ensembl"/>
</dbReference>
<dbReference type="GO" id="GO:0070098">
    <property type="term" value="P:chemokine-mediated signaling pathway"/>
    <property type="evidence" value="ECO:0007669"/>
    <property type="project" value="Ensembl"/>
</dbReference>
<dbReference type="GO" id="GO:0006935">
    <property type="term" value="P:chemotaxis"/>
    <property type="evidence" value="ECO:0000250"/>
    <property type="project" value="UniProtKB"/>
</dbReference>
<dbReference type="GO" id="GO:0051607">
    <property type="term" value="P:defense response to virus"/>
    <property type="evidence" value="ECO:0000314"/>
    <property type="project" value="MGI"/>
</dbReference>
<dbReference type="GO" id="GO:0042118">
    <property type="term" value="P:endothelial cell activation"/>
    <property type="evidence" value="ECO:0007669"/>
    <property type="project" value="Ensembl"/>
</dbReference>
<dbReference type="GO" id="GO:0007186">
    <property type="term" value="P:G protein-coupled receptor signaling pathway"/>
    <property type="evidence" value="ECO:0000250"/>
    <property type="project" value="UniProtKB"/>
</dbReference>
<dbReference type="GO" id="GO:0006954">
    <property type="term" value="P:inflammatory response"/>
    <property type="evidence" value="ECO:0007669"/>
    <property type="project" value="UniProtKB-KW"/>
</dbReference>
<dbReference type="GO" id="GO:0016525">
    <property type="term" value="P:negative regulation of angiogenesis"/>
    <property type="evidence" value="ECO:0007669"/>
    <property type="project" value="Ensembl"/>
</dbReference>
<dbReference type="GO" id="GO:0045662">
    <property type="term" value="P:negative regulation of myoblast differentiation"/>
    <property type="evidence" value="ECO:0000315"/>
    <property type="project" value="MGI"/>
</dbReference>
<dbReference type="GO" id="GO:1901740">
    <property type="term" value="P:negative regulation of myoblast fusion"/>
    <property type="evidence" value="ECO:0000315"/>
    <property type="project" value="MGI"/>
</dbReference>
<dbReference type="GO" id="GO:0090026">
    <property type="term" value="P:positive regulation of monocyte chemotaxis"/>
    <property type="evidence" value="ECO:0007669"/>
    <property type="project" value="Ensembl"/>
</dbReference>
<dbReference type="GO" id="GO:0051281">
    <property type="term" value="P:positive regulation of release of sequestered calcium ion into cytosol"/>
    <property type="evidence" value="ECO:0000250"/>
    <property type="project" value="UniProtKB"/>
</dbReference>
<dbReference type="GO" id="GO:2000406">
    <property type="term" value="P:positive regulation of T cell migration"/>
    <property type="evidence" value="ECO:0000266"/>
    <property type="project" value="MGI"/>
</dbReference>
<dbReference type="GO" id="GO:0042981">
    <property type="term" value="P:regulation of apoptotic process"/>
    <property type="evidence" value="ECO:0007669"/>
    <property type="project" value="Ensembl"/>
</dbReference>
<dbReference type="GO" id="GO:0042127">
    <property type="term" value="P:regulation of cell population proliferation"/>
    <property type="evidence" value="ECO:0000250"/>
    <property type="project" value="UniProtKB"/>
</dbReference>
<dbReference type="GO" id="GO:1901509">
    <property type="term" value="P:regulation of endothelial tube morphogenesis"/>
    <property type="evidence" value="ECO:0007669"/>
    <property type="project" value="Ensembl"/>
</dbReference>
<dbReference type="GO" id="GO:0010819">
    <property type="term" value="P:regulation of T cell chemotaxis"/>
    <property type="evidence" value="ECO:0007669"/>
    <property type="project" value="Ensembl"/>
</dbReference>
<dbReference type="GO" id="GO:0009617">
    <property type="term" value="P:response to bacterium"/>
    <property type="evidence" value="ECO:0000270"/>
    <property type="project" value="MGI"/>
</dbReference>
<dbReference type="GO" id="GO:0010818">
    <property type="term" value="P:T cell chemotaxis"/>
    <property type="evidence" value="ECO:0007669"/>
    <property type="project" value="Ensembl"/>
</dbReference>
<dbReference type="CDD" id="cd00273">
    <property type="entry name" value="Chemokine_CXC"/>
    <property type="match status" value="1"/>
</dbReference>
<dbReference type="FunFam" id="2.40.50.40:FF:000004">
    <property type="entry name" value="C-X-C motif chemokine"/>
    <property type="match status" value="1"/>
</dbReference>
<dbReference type="Gene3D" id="2.40.50.40">
    <property type="match status" value="1"/>
</dbReference>
<dbReference type="InterPro" id="IPR039809">
    <property type="entry name" value="Chemokine_b/g/d"/>
</dbReference>
<dbReference type="InterPro" id="IPR001089">
    <property type="entry name" value="Chemokine_CXC"/>
</dbReference>
<dbReference type="InterPro" id="IPR018048">
    <property type="entry name" value="Chemokine_CXC_CS"/>
</dbReference>
<dbReference type="InterPro" id="IPR001811">
    <property type="entry name" value="Chemokine_IL8-like_dom"/>
</dbReference>
<dbReference type="InterPro" id="IPR033899">
    <property type="entry name" value="CXC_Chemokine_domain"/>
</dbReference>
<dbReference type="InterPro" id="IPR036048">
    <property type="entry name" value="Interleukin_8-like_sf"/>
</dbReference>
<dbReference type="PANTHER" id="PTHR12015:SF188">
    <property type="entry name" value="C-X-C MOTIF CHEMOKINE 10"/>
    <property type="match status" value="1"/>
</dbReference>
<dbReference type="PANTHER" id="PTHR12015">
    <property type="entry name" value="SMALL INDUCIBLE CYTOKINE A"/>
    <property type="match status" value="1"/>
</dbReference>
<dbReference type="Pfam" id="PF00048">
    <property type="entry name" value="IL8"/>
    <property type="match status" value="1"/>
</dbReference>
<dbReference type="PRINTS" id="PR00436">
    <property type="entry name" value="INTERLEUKIN8"/>
</dbReference>
<dbReference type="PRINTS" id="PR00437">
    <property type="entry name" value="SMALLCYTKCXC"/>
</dbReference>
<dbReference type="SMART" id="SM00199">
    <property type="entry name" value="SCY"/>
    <property type="match status" value="1"/>
</dbReference>
<dbReference type="SUPFAM" id="SSF54117">
    <property type="entry name" value="Interleukin 8-like chemokines"/>
    <property type="match status" value="1"/>
</dbReference>
<dbReference type="PROSITE" id="PS00471">
    <property type="entry name" value="SMALL_CYTOKINES_CXC"/>
    <property type="match status" value="1"/>
</dbReference>
<feature type="signal peptide" evidence="2">
    <location>
        <begin position="1"/>
        <end position="21"/>
    </location>
</feature>
<feature type="chain" id="PRO_0000005104" description="C-X-C motif chemokine 10">
    <location>
        <begin position="22"/>
        <end position="98"/>
    </location>
</feature>
<feature type="modified residue" description="Citrulline" evidence="1">
    <location>
        <position position="26"/>
    </location>
</feature>
<feature type="disulfide bond" evidence="4">
    <location>
        <begin position="30"/>
        <end position="57"/>
    </location>
</feature>
<feature type="disulfide bond" evidence="4">
    <location>
        <begin position="32"/>
        <end position="74"/>
    </location>
</feature>
<feature type="strand" evidence="11">
    <location>
        <begin position="26"/>
        <end position="31"/>
    </location>
</feature>
<feature type="strand" evidence="11">
    <location>
        <begin position="42"/>
        <end position="44"/>
    </location>
</feature>
<feature type="strand" evidence="11">
    <location>
        <begin position="47"/>
        <end position="51"/>
    </location>
</feature>
<feature type="strand" evidence="11">
    <location>
        <begin position="55"/>
        <end position="59"/>
    </location>
</feature>
<feature type="strand" evidence="11">
    <location>
        <begin position="61"/>
        <end position="65"/>
    </location>
</feature>
<feature type="turn" evidence="11">
    <location>
        <begin position="67"/>
        <end position="69"/>
    </location>
</feature>
<feature type="strand" evidence="11">
    <location>
        <begin position="72"/>
        <end position="75"/>
    </location>
</feature>
<feature type="helix" evidence="11">
    <location>
        <begin position="80"/>
        <end position="86"/>
    </location>
</feature>
<keyword id="KW-0002">3D-structure</keyword>
<keyword id="KW-0145">Chemotaxis</keyword>
<keyword id="KW-0164">Citrullination</keyword>
<keyword id="KW-0202">Cytokine</keyword>
<keyword id="KW-1015">Disulfide bond</keyword>
<keyword id="KW-0395">Inflammatory response</keyword>
<keyword id="KW-1185">Reference proteome</keyword>
<keyword id="KW-0964">Secreted</keyword>
<keyword id="KW-0732">Signal</keyword>
<sequence>MNPSAAVIFCLILLGLSGTQGIPLARTVRCNCIHIDDGPVRMRAIGKLEIIPASLSCPRVEIIATMKKNDEQRCLNPESKTIKNLMKAFSQKRSKRAP</sequence>
<evidence type="ECO:0000250" key="1">
    <source>
        <dbReference type="UniProtKB" id="P02778"/>
    </source>
</evidence>
<evidence type="ECO:0000255" key="2"/>
<evidence type="ECO:0000269" key="3">
    <source>
    </source>
</evidence>
<evidence type="ECO:0000269" key="4">
    <source>
    </source>
</evidence>
<evidence type="ECO:0000269" key="5">
    <source>
    </source>
</evidence>
<evidence type="ECO:0000269" key="6">
    <source>
    </source>
</evidence>
<evidence type="ECO:0000269" key="7">
    <source>
    </source>
</evidence>
<evidence type="ECO:0000269" key="8">
    <source>
    </source>
</evidence>
<evidence type="ECO:0000269" key="9">
    <source>
    </source>
</evidence>
<evidence type="ECO:0000305" key="10"/>
<evidence type="ECO:0007829" key="11">
    <source>
        <dbReference type="PDB" id="2R3Z"/>
    </source>
</evidence>
<comment type="function">
    <text evidence="1 3 5 6 7 8">Pro-inflammatory cytokine that is involved in a wide variety of processes such as chemotaxis, differentiation, and activation of peripheral immune cells, regulation of cell growth, apoptosis and modulation of angiostatic effects (By similarity) (PubMed:28623423). Plays thereby an important role during viral infections by stimulating the activation and migration of immune cells to the infected sites (PubMed:18624292, PubMed:19017990, PubMed:28468883). Mechanistically, binding of CXCL10 to the CXCR3 receptor activates G protein-mediated signaling and results in downstream activation of phospholipase C-dependent pathway, an increase in intracellular calcium production and actin reorganization. In turn, recruitment of activated Th1 lymphocytes occurs at sites of inflammation (By similarity). Activation of the CXCL10/CXCR3 axis also plays an important role in neurons in response to brain injury for activating microglia, the resident macrophage population of the central nervous system, and directing them to the lesion site. This recruitment is an essential element for neuronal reorganization (PubMed:15456824).</text>
</comment>
<comment type="subunit">
    <text evidence="1 4">Monomer, dimer, and tetramer (PubMed:18560148). Interacts with CXCR3 (via N-terminus) (By similarity).</text>
</comment>
<comment type="subcellular location">
    <subcellularLocation>
        <location evidence="1">Secreted</location>
    </subcellularLocation>
</comment>
<comment type="tissue specificity">
    <text evidence="3 9">Expressed in the spleen, thymus, lymph nodes and liver (PubMed:8145049). Expressed in astrocytes, microglia, and neurons (PubMed:15456824).</text>
</comment>
<comment type="induction">
    <text>By interferon gamma.</text>
</comment>
<comment type="disruption phenotype">
    <text evidence="6 7">CXCL10-deficient mice possess a significantly reduced or delayed infiltration of NK and HSV-1-specific CD8+ T cells into herpes virus-infected tissue. In consequence, the antiviral response is delayed.</text>
</comment>
<comment type="similarity">
    <text evidence="10">Belongs to the intercrine alpha (chemokine CxC) family.</text>
</comment>